<reference key="1">
    <citation type="submission" date="2009-02" db="EMBL/GenBank/DDBJ databases">
        <title>The genome sequence of Ajellomyces capsulatus strain G186AR.</title>
        <authorList>
            <person name="Champion M."/>
            <person name="Cuomo C.A."/>
            <person name="Ma L.-J."/>
            <person name="Henn M.R."/>
            <person name="Sil A."/>
            <person name="Goldman B."/>
            <person name="Young S.K."/>
            <person name="Kodira C.D."/>
            <person name="Zeng Q."/>
            <person name="Koehrsen M."/>
            <person name="Alvarado L."/>
            <person name="Berlin A."/>
            <person name="Borenstein D."/>
            <person name="Chen Z."/>
            <person name="Engels R."/>
            <person name="Freedman E."/>
            <person name="Gellesch M."/>
            <person name="Goldberg J."/>
            <person name="Griggs A."/>
            <person name="Gujja S."/>
            <person name="Heiman D."/>
            <person name="Hepburn T."/>
            <person name="Howarth C."/>
            <person name="Jen D."/>
            <person name="Larson L."/>
            <person name="Lewis B."/>
            <person name="Mehta T."/>
            <person name="Park D."/>
            <person name="Pearson M."/>
            <person name="Roberts A."/>
            <person name="Saif S."/>
            <person name="Shea T."/>
            <person name="Shenoy N."/>
            <person name="Sisk P."/>
            <person name="Stolte C."/>
            <person name="Sykes S."/>
            <person name="Walk T."/>
            <person name="White J."/>
            <person name="Yandava C."/>
            <person name="Klein B."/>
            <person name="McEwen J.G."/>
            <person name="Puccia R."/>
            <person name="Goldman G.H."/>
            <person name="Felipe M.S."/>
            <person name="Nino-Vega G."/>
            <person name="San-Blas G."/>
            <person name="Taylor J."/>
            <person name="Mendoza L."/>
            <person name="Galagan J.E."/>
            <person name="Nusbaum C."/>
            <person name="Birren B.W."/>
        </authorList>
    </citation>
    <scope>NUCLEOTIDE SEQUENCE [LARGE SCALE GENOMIC DNA]</scope>
    <source>
        <strain>G186AR / H82 / ATCC MYA-2454 / RMSCC 2432</strain>
    </source>
</reference>
<dbReference type="EMBL" id="GG663365">
    <property type="protein sequence ID" value="EEH08808.1"/>
    <property type="molecule type" value="Genomic_DNA"/>
</dbReference>
<dbReference type="SMR" id="C0NIT8"/>
<dbReference type="FunCoup" id="C0NIT8">
    <property type="interactions" value="12"/>
</dbReference>
<dbReference type="STRING" id="447093.C0NIT8"/>
<dbReference type="VEuPathDB" id="FungiDB:I7I50_10789"/>
<dbReference type="HOGENOM" id="CLU_033658_0_0_1"/>
<dbReference type="InParanoid" id="C0NIT8"/>
<dbReference type="Proteomes" id="UP000001631">
    <property type="component" value="Unassembled WGS sequence"/>
</dbReference>
<dbReference type="GO" id="GO:0005737">
    <property type="term" value="C:cytoplasm"/>
    <property type="evidence" value="ECO:0007669"/>
    <property type="project" value="UniProtKB-SubCell"/>
</dbReference>
<dbReference type="GO" id="GO:0031965">
    <property type="term" value="C:nuclear membrane"/>
    <property type="evidence" value="ECO:0007669"/>
    <property type="project" value="TreeGrafter"/>
</dbReference>
<dbReference type="GO" id="GO:0070628">
    <property type="term" value="F:proteasome binding"/>
    <property type="evidence" value="ECO:0007669"/>
    <property type="project" value="TreeGrafter"/>
</dbReference>
<dbReference type="GO" id="GO:0071630">
    <property type="term" value="P:nuclear protein quality control by the ubiquitin-proteasome system"/>
    <property type="evidence" value="ECO:0007669"/>
    <property type="project" value="InterPro"/>
</dbReference>
<dbReference type="GO" id="GO:0031144">
    <property type="term" value="P:proteasome localization"/>
    <property type="evidence" value="ECO:0007669"/>
    <property type="project" value="InterPro"/>
</dbReference>
<dbReference type="GO" id="GO:0015031">
    <property type="term" value="P:protein transport"/>
    <property type="evidence" value="ECO:0007669"/>
    <property type="project" value="UniProtKB-KW"/>
</dbReference>
<dbReference type="FunFam" id="1.20.58.1590:FF:000001">
    <property type="entry name" value="Tethering factor for nuclear proteasome STS1"/>
    <property type="match status" value="1"/>
</dbReference>
<dbReference type="Gene3D" id="1.20.58.1590">
    <property type="entry name" value="Tethering factor for nuclear proteasome Cut8/Sts1"/>
    <property type="match status" value="1"/>
</dbReference>
<dbReference type="InterPro" id="IPR013868">
    <property type="entry name" value="Cut8/Sts1_fam"/>
</dbReference>
<dbReference type="InterPro" id="IPR038422">
    <property type="entry name" value="Cut8/Sts1_sf"/>
</dbReference>
<dbReference type="PANTHER" id="PTHR28032">
    <property type="entry name" value="FI02826P"/>
    <property type="match status" value="1"/>
</dbReference>
<dbReference type="PANTHER" id="PTHR28032:SF1">
    <property type="entry name" value="FI02826P"/>
    <property type="match status" value="1"/>
</dbReference>
<dbReference type="Pfam" id="PF08559">
    <property type="entry name" value="Cut8"/>
    <property type="match status" value="1"/>
</dbReference>
<name>STS1_AJECG</name>
<proteinExistence type="inferred from homology"/>
<protein>
    <recommendedName>
        <fullName>Tethering factor for nuclear proteasome STS1</fullName>
    </recommendedName>
</protein>
<feature type="chain" id="PRO_0000409387" description="Tethering factor for nuclear proteasome STS1">
    <location>
        <begin position="1"/>
        <end position="312"/>
    </location>
</feature>
<feature type="region of interest" description="Disordered" evidence="2">
    <location>
        <begin position="1"/>
        <end position="82"/>
    </location>
</feature>
<feature type="compositionally biased region" description="Low complexity" evidence="2">
    <location>
        <begin position="21"/>
        <end position="32"/>
    </location>
</feature>
<feature type="compositionally biased region" description="Basic and acidic residues" evidence="2">
    <location>
        <begin position="38"/>
        <end position="51"/>
    </location>
</feature>
<comment type="function">
    <text evidence="1">Involved in ubiquitin-mediated protein degradation. Regulatory factor in the ubiquitin/proteasome pathway that controls the turnover of proteasome substrates. Targets proteasomes to the nucleus and facilitates the degradation of nuclear proteins (By similarity).</text>
</comment>
<comment type="subunit">
    <text evidence="1">Binds the proteasome.</text>
</comment>
<comment type="subcellular location">
    <subcellularLocation>
        <location evidence="1">Cytoplasm</location>
    </subcellularLocation>
    <subcellularLocation>
        <location evidence="1">Nucleus</location>
    </subcellularLocation>
</comment>
<comment type="similarity">
    <text evidence="3">Belongs to the cut8/STS1 family.</text>
</comment>
<accession>C0NIT8</accession>
<gene>
    <name type="primary">STS1</name>
    <name type="ORF">HCBG_02345</name>
</gene>
<evidence type="ECO:0000250" key="1"/>
<evidence type="ECO:0000256" key="2">
    <source>
        <dbReference type="SAM" id="MobiDB-lite"/>
    </source>
</evidence>
<evidence type="ECO:0000305" key="3"/>
<organism>
    <name type="scientific">Ajellomyces capsulatus (strain G186AR / H82 / ATCC MYA-2454 / RMSCC 2432)</name>
    <name type="common">Darling's disease fungus</name>
    <name type="synonym">Histoplasma capsulatum</name>
    <dbReference type="NCBI Taxonomy" id="447093"/>
    <lineage>
        <taxon>Eukaryota</taxon>
        <taxon>Fungi</taxon>
        <taxon>Dikarya</taxon>
        <taxon>Ascomycota</taxon>
        <taxon>Pezizomycotina</taxon>
        <taxon>Eurotiomycetes</taxon>
        <taxon>Eurotiomycetidae</taxon>
        <taxon>Onygenales</taxon>
        <taxon>Ajellomycetaceae</taxon>
        <taxon>Histoplasma</taxon>
    </lineage>
</organism>
<keyword id="KW-0963">Cytoplasm</keyword>
<keyword id="KW-0539">Nucleus</keyword>
<keyword id="KW-0653">Protein transport</keyword>
<keyword id="KW-1185">Reference proteome</keyword>
<keyword id="KW-0813">Transport</keyword>
<sequence length="312" mass="34358">MNSLLATPPVPPHFYEHCRLSPSRSMSSTNPSGNRKRKAEDDYLPSDHDTRMSASPSNSPAFPPRPLPASRQIKRSRPNISGRPLSLSRLLETLDTDALRSVLRSMCDRHPELATEVVHTAPRPSVSSALQVLNNYQSALHSSIPLGGNSSSDYAYNRVRQHIVNLLDALSDFTPHFLPPNESQTSTALSYLDGATEILHRLPRWDTPQNNLEKDAAYEEMAKAWILVIREAGKRGGGIQLQYGGWDEKLSKHNQTAGGKLQDAVDVLSSNLGWMGTNQDLSNNQGVDASSIRQQLLSGTYGSGMPLKVGRW</sequence>